<accession>P52862</accession>
<gene>
    <name evidence="1" type="primary">rpl11</name>
</gene>
<comment type="function">
    <text evidence="1">Forms part of the ribosomal stalk which helps the ribosome interact with GTP-bound translation factors.</text>
</comment>
<comment type="subunit">
    <text evidence="1">Part of the ribosomal stalk of the 50S ribosomal subunit. Interacts with L10 and the large rRNA to form the base of the stalk. L10 forms an elongated spine to which L12 dimers bind in a sequential fashion forming a multimeric L10(L12)X complex.</text>
</comment>
<comment type="similarity">
    <text evidence="1">Belongs to the universal ribosomal protein uL11 family.</text>
</comment>
<evidence type="ECO:0000255" key="1">
    <source>
        <dbReference type="HAMAP-Rule" id="MF_00736"/>
    </source>
</evidence>
<evidence type="ECO:0000305" key="2"/>
<protein>
    <recommendedName>
        <fullName evidence="1">Large ribosomal subunit protein uL11</fullName>
    </recommendedName>
    <alternativeName>
        <fullName evidence="2">50S ribosomal protein L11</fullName>
    </alternativeName>
</protein>
<reference key="1">
    <citation type="journal article" date="1997" name="Biochim. Biophys. Acta">
        <title>The signal recognition particle receptor alpha subunit of the hyperthermophilic archaeon Acidianus ambivalens exhibits an intrinsic GTP-hydrolyzing activity.</title>
        <authorList>
            <person name="Moll R."/>
            <person name="Schmidtke S."/>
            <person name="Petersen A."/>
            <person name="Schaefer G."/>
        </authorList>
    </citation>
    <scope>NUCLEOTIDE SEQUENCE [GENOMIC DNA]</scope>
    <source>
        <strain>Lei 10 / DSM 3772 / JCM 9191</strain>
    </source>
</reference>
<name>RL11_ACIAM</name>
<feature type="chain" id="PRO_0000104428" description="Large ribosomal subunit protein uL11">
    <location>
        <begin position="1"/>
        <end position="141" status="greater than"/>
    </location>
</feature>
<feature type="non-terminal residue">
    <location>
        <position position="141"/>
    </location>
</feature>
<organism>
    <name type="scientific">Acidianus ambivalens</name>
    <name type="common">Desulfurolobus ambivalens</name>
    <dbReference type="NCBI Taxonomy" id="2283"/>
    <lineage>
        <taxon>Archaea</taxon>
        <taxon>Thermoproteota</taxon>
        <taxon>Thermoprotei</taxon>
        <taxon>Sulfolobales</taxon>
        <taxon>Sulfolobaceae</taxon>
        <taxon>Acidianus</taxon>
    </lineage>
</organism>
<proteinExistence type="inferred from homology"/>
<dbReference type="EMBL" id="X95989">
    <property type="protein sequence ID" value="CAA65236.1"/>
    <property type="molecule type" value="Genomic_DNA"/>
</dbReference>
<dbReference type="PIR" id="T48925">
    <property type="entry name" value="T48925"/>
</dbReference>
<dbReference type="SMR" id="P52862"/>
<dbReference type="GO" id="GO:0015934">
    <property type="term" value="C:large ribosomal subunit"/>
    <property type="evidence" value="ECO:0007669"/>
    <property type="project" value="TreeGrafter"/>
</dbReference>
<dbReference type="GO" id="GO:0070180">
    <property type="term" value="F:large ribosomal subunit rRNA binding"/>
    <property type="evidence" value="ECO:0007669"/>
    <property type="project" value="TreeGrafter"/>
</dbReference>
<dbReference type="GO" id="GO:0003735">
    <property type="term" value="F:structural constituent of ribosome"/>
    <property type="evidence" value="ECO:0007669"/>
    <property type="project" value="InterPro"/>
</dbReference>
<dbReference type="GO" id="GO:0006412">
    <property type="term" value="P:translation"/>
    <property type="evidence" value="ECO:0007669"/>
    <property type="project" value="InterPro"/>
</dbReference>
<dbReference type="CDD" id="cd00349">
    <property type="entry name" value="Ribosomal_L11"/>
    <property type="match status" value="1"/>
</dbReference>
<dbReference type="Gene3D" id="1.10.10.250">
    <property type="entry name" value="Ribosomal protein L11, C-terminal domain"/>
    <property type="match status" value="1"/>
</dbReference>
<dbReference type="Gene3D" id="3.30.1550.10">
    <property type="entry name" value="Ribosomal protein L11/L12, N-terminal domain"/>
    <property type="match status" value="1"/>
</dbReference>
<dbReference type="HAMAP" id="MF_00736">
    <property type="entry name" value="Ribosomal_uL11"/>
    <property type="match status" value="1"/>
</dbReference>
<dbReference type="InterPro" id="IPR000911">
    <property type="entry name" value="Ribosomal_uL11"/>
</dbReference>
<dbReference type="InterPro" id="IPR020783">
    <property type="entry name" value="Ribosomal_uL11_C"/>
</dbReference>
<dbReference type="InterPro" id="IPR036769">
    <property type="entry name" value="Ribosomal_uL11_C_sf"/>
</dbReference>
<dbReference type="InterPro" id="IPR020785">
    <property type="entry name" value="Ribosomal_uL11_CS"/>
</dbReference>
<dbReference type="InterPro" id="IPR020784">
    <property type="entry name" value="Ribosomal_uL11_N"/>
</dbReference>
<dbReference type="InterPro" id="IPR036796">
    <property type="entry name" value="Ribosomal_uL11_N_sf"/>
</dbReference>
<dbReference type="NCBIfam" id="NF002232">
    <property type="entry name" value="PRK01143.1"/>
    <property type="match status" value="1"/>
</dbReference>
<dbReference type="PANTHER" id="PTHR11661">
    <property type="entry name" value="60S RIBOSOMAL PROTEIN L12"/>
    <property type="match status" value="1"/>
</dbReference>
<dbReference type="PANTHER" id="PTHR11661:SF1">
    <property type="entry name" value="LARGE RIBOSOMAL SUBUNIT PROTEIN UL11M"/>
    <property type="match status" value="1"/>
</dbReference>
<dbReference type="Pfam" id="PF00298">
    <property type="entry name" value="Ribosomal_L11"/>
    <property type="match status" value="1"/>
</dbReference>
<dbReference type="Pfam" id="PF03946">
    <property type="entry name" value="Ribosomal_L11_N"/>
    <property type="match status" value="1"/>
</dbReference>
<dbReference type="SMART" id="SM00649">
    <property type="entry name" value="RL11"/>
    <property type="match status" value="1"/>
</dbReference>
<dbReference type="SUPFAM" id="SSF54747">
    <property type="entry name" value="Ribosomal L11/L12e N-terminal domain"/>
    <property type="match status" value="1"/>
</dbReference>
<dbReference type="SUPFAM" id="SSF46906">
    <property type="entry name" value="Ribosomal protein L11, C-terminal domain"/>
    <property type="match status" value="1"/>
</dbReference>
<dbReference type="PROSITE" id="PS00359">
    <property type="entry name" value="RIBOSOMAL_L11"/>
    <property type="match status" value="1"/>
</dbReference>
<keyword id="KW-0687">Ribonucleoprotein</keyword>
<keyword id="KW-0689">Ribosomal protein</keyword>
<keyword id="KW-0694">RNA-binding</keyword>
<keyword id="KW-0699">rRNA-binding</keyword>
<sequence length="141" mass="14776">MPKKTIKIVVEGGNVKPGPPLGPTLSQLKLNVGEVVKKINEATAQFKGMTVPVTIDVDLDTKEFEISVGIPTTSSLLLKKAGAEAPSGDPAHKKIANVSLEDIIDVAITKKPSLTAKTLKAAVKSILGTARQIGLTVDKKD</sequence>